<evidence type="ECO:0000250" key="1"/>
<evidence type="ECO:0000256" key="2">
    <source>
        <dbReference type="SAM" id="MobiDB-lite"/>
    </source>
</evidence>
<evidence type="ECO:0000305" key="3"/>
<gene>
    <name type="primary">UTP25</name>
    <name type="ORF">Lema_P048150.1</name>
</gene>
<name>UTP25_LEPMJ</name>
<proteinExistence type="inferred from homology"/>
<sequence length="741" mass="83853">MAPFRGRGGFRGGARGASMSRGRRGAARGGAKRGGFAAARTADQVEESNTQFRQAPESEHSQPESSDESASEAEDDEDSEDAQPASAIYATLLQSMSARKTPFGGTVVDPPHVSHRKKRKLHHHVPGPEEVPGAALMPEEGHAHPRGDDQGSETNGPASGGEDHEEEGEAEDLDEEEEQQRLDNTEDSPFDAHFANPDENELAVRLKRITDNQWITKKLDVGRGRGVLQVPAADEIALSRRKVRSTRDVVLKARLVDNAQKVLGNFDDTEQAIAPSIFDYQDLLFGARTVQNAGRLRDIICLHALNHILMTRDRVIKNNAKLAAATDDVDAEYRDQGFTRPKILFLLETKQACVRLLDSITKLHDFEQQENKKRFLESFSLPEDKFSDEKPADFRELFEGNDENEFRIGVKLTRKTLKLYSTFYNSDIILASALGLRRAIESGDPKKRDSDFLSSIEMVIMEQADATLMQNWEHAEFVFEHLNLQPKDPHDCDFSRVRSWYLDDQARHIRQTIVLSAYLTPKINTLYNKYMRNVAGRLKYTQDYTTGLIETLSYGIKQTFLRFDSPSHLTDPDARFKYFNTSILPSISRLPKTPEGGPGVLVFIPSYLDFVRVRNSLVDSDFSYASISEYTDTTDVRKARSHFMNGKHSLLLYTGRAHHFHRYNIRGVKRVVFYGVPENPRFYDEILGFVGKTVERGEVSRAEAGVRVCFSRWERLELERIVGSKRIVRMIADKGDVFDFV</sequence>
<feature type="chain" id="PRO_0000408120" description="U3 small nucleolar RNA-associated protein 25">
    <location>
        <begin position="1"/>
        <end position="741"/>
    </location>
</feature>
<feature type="region of interest" description="Disordered" evidence="2">
    <location>
        <begin position="1"/>
        <end position="197"/>
    </location>
</feature>
<feature type="compositionally biased region" description="Gly residues" evidence="2">
    <location>
        <begin position="1"/>
        <end position="15"/>
    </location>
</feature>
<feature type="compositionally biased region" description="Acidic residues" evidence="2">
    <location>
        <begin position="65"/>
        <end position="81"/>
    </location>
</feature>
<feature type="compositionally biased region" description="Basic residues" evidence="2">
    <location>
        <begin position="113"/>
        <end position="125"/>
    </location>
</feature>
<feature type="compositionally biased region" description="Basic and acidic residues" evidence="2">
    <location>
        <begin position="139"/>
        <end position="149"/>
    </location>
</feature>
<feature type="compositionally biased region" description="Acidic residues" evidence="2">
    <location>
        <begin position="163"/>
        <end position="178"/>
    </location>
</feature>
<comment type="function">
    <text evidence="1">DEAD-box RNA helicase-like protein required for pre-18S rRNA processing, specifically at sites A0, A1, and A2.</text>
</comment>
<comment type="subunit">
    <text evidence="1">Component of the ribosomal small subunit (SSU) processome composed of at least 40 protein subunits and snoRNA U3.</text>
</comment>
<comment type="subcellular location">
    <subcellularLocation>
        <location evidence="1">Nucleus</location>
        <location evidence="1">Nucleolus</location>
    </subcellularLocation>
</comment>
<comment type="similarity">
    <text evidence="3">Belongs to the UTP25 family.</text>
</comment>
<dbReference type="EMBL" id="FP929083">
    <property type="protein sequence ID" value="CBX92109.1"/>
    <property type="molecule type" value="Genomic_DNA"/>
</dbReference>
<dbReference type="RefSeq" id="XP_003835474.1">
    <property type="nucleotide sequence ID" value="XM_003835426.1"/>
</dbReference>
<dbReference type="FunCoup" id="E5R5D9">
    <property type="interactions" value="1152"/>
</dbReference>
<dbReference type="STRING" id="985895.E5R5D9"/>
<dbReference type="EnsemblFungi" id="CBX92109">
    <property type="protein sequence ID" value="CBX92109"/>
    <property type="gene ID" value="LEMA_P048150.1"/>
</dbReference>
<dbReference type="GeneID" id="13284123"/>
<dbReference type="VEuPathDB" id="FungiDB:LEMA_P048150.1"/>
<dbReference type="eggNOG" id="KOG2340">
    <property type="taxonomic scope" value="Eukaryota"/>
</dbReference>
<dbReference type="HOGENOM" id="CLU_018705_0_1_1"/>
<dbReference type="InParanoid" id="E5R5D9"/>
<dbReference type="OMA" id="QDRGDTF"/>
<dbReference type="OrthoDB" id="10264378at2759"/>
<dbReference type="Proteomes" id="UP000002668">
    <property type="component" value="Genome"/>
</dbReference>
<dbReference type="GO" id="GO:0005730">
    <property type="term" value="C:nucleolus"/>
    <property type="evidence" value="ECO:0007669"/>
    <property type="project" value="UniProtKB-SubCell"/>
</dbReference>
<dbReference type="GO" id="GO:0032040">
    <property type="term" value="C:small-subunit processome"/>
    <property type="evidence" value="ECO:0007669"/>
    <property type="project" value="TreeGrafter"/>
</dbReference>
<dbReference type="GO" id="GO:0019843">
    <property type="term" value="F:rRNA binding"/>
    <property type="evidence" value="ECO:0007669"/>
    <property type="project" value="TreeGrafter"/>
</dbReference>
<dbReference type="GO" id="GO:0034511">
    <property type="term" value="F:U3 snoRNA binding"/>
    <property type="evidence" value="ECO:0007669"/>
    <property type="project" value="InterPro"/>
</dbReference>
<dbReference type="GO" id="GO:0000462">
    <property type="term" value="P:maturation of SSU-rRNA from tricistronic rRNA transcript (SSU-rRNA, 5.8S rRNA, LSU-rRNA)"/>
    <property type="evidence" value="ECO:0007669"/>
    <property type="project" value="TreeGrafter"/>
</dbReference>
<dbReference type="FunFam" id="3.40.50.300:FF:002356">
    <property type="entry name" value="U3 small nucleolar RNA-associated protein 25"/>
    <property type="match status" value="1"/>
</dbReference>
<dbReference type="InterPro" id="IPR010678">
    <property type="entry name" value="UTP25"/>
</dbReference>
<dbReference type="InterPro" id="IPR053939">
    <property type="entry name" value="UTP25_C"/>
</dbReference>
<dbReference type="InterPro" id="IPR053940">
    <property type="entry name" value="UTP25_NTPase-like"/>
</dbReference>
<dbReference type="PANTHER" id="PTHR12933">
    <property type="entry name" value="ORF PROTEIN-RELATED"/>
    <property type="match status" value="1"/>
</dbReference>
<dbReference type="PANTHER" id="PTHR12933:SF0">
    <property type="entry name" value="U3 SMALL NUCLEOLAR RNA-ASSOCIATED PROTEIN 25 HOMOLOG"/>
    <property type="match status" value="1"/>
</dbReference>
<dbReference type="Pfam" id="PF06862">
    <property type="entry name" value="Utp25_C"/>
    <property type="match status" value="1"/>
</dbReference>
<dbReference type="Pfam" id="PF22916">
    <property type="entry name" value="UTP25_NTPase-like"/>
    <property type="match status" value="1"/>
</dbReference>
<organism>
    <name type="scientific">Leptosphaeria maculans (strain JN3 / isolate v23.1.3 / race Av1-4-5-6-7-8)</name>
    <name type="common">Blackleg fungus</name>
    <name type="synonym">Phoma lingam</name>
    <dbReference type="NCBI Taxonomy" id="985895"/>
    <lineage>
        <taxon>Eukaryota</taxon>
        <taxon>Fungi</taxon>
        <taxon>Dikarya</taxon>
        <taxon>Ascomycota</taxon>
        <taxon>Pezizomycotina</taxon>
        <taxon>Dothideomycetes</taxon>
        <taxon>Pleosporomycetidae</taxon>
        <taxon>Pleosporales</taxon>
        <taxon>Pleosporineae</taxon>
        <taxon>Leptosphaeriaceae</taxon>
        <taxon>Plenodomus</taxon>
        <taxon>Plenodomus lingam/Leptosphaeria maculans species complex</taxon>
    </lineage>
</organism>
<keyword id="KW-0539">Nucleus</keyword>
<keyword id="KW-1185">Reference proteome</keyword>
<keyword id="KW-0687">Ribonucleoprotein</keyword>
<keyword id="KW-0690">Ribosome biogenesis</keyword>
<keyword id="KW-0698">rRNA processing</keyword>
<protein>
    <recommendedName>
        <fullName>U3 small nucleolar RNA-associated protein 25</fullName>
        <shortName>U3 snoRNA-associated protein 25</shortName>
    </recommendedName>
    <alternativeName>
        <fullName>U three protein 25</fullName>
    </alternativeName>
</protein>
<reference key="1">
    <citation type="journal article" date="2011" name="Nat. Commun.">
        <title>Effector diversification within compartments of the Leptosphaeria maculans genome affected by Repeat-Induced Point mutations.</title>
        <authorList>
            <person name="Rouxel T."/>
            <person name="Grandaubert J."/>
            <person name="Hane J.K."/>
            <person name="Hoede C."/>
            <person name="van de Wouw A.P."/>
            <person name="Couloux A."/>
            <person name="Dominguez V."/>
            <person name="Anthouard V."/>
            <person name="Bally P."/>
            <person name="Bourras S."/>
            <person name="Cozijnsen A.J."/>
            <person name="Ciuffetti L.M."/>
            <person name="Degrave A."/>
            <person name="Dilmaghani A."/>
            <person name="Duret L."/>
            <person name="Fudal I."/>
            <person name="Goodwin S.B."/>
            <person name="Gout L."/>
            <person name="Glaser N."/>
            <person name="Linglin J."/>
            <person name="Kema G.H.J."/>
            <person name="Lapalu N."/>
            <person name="Lawrence C.B."/>
            <person name="May K."/>
            <person name="Meyer M."/>
            <person name="Ollivier B."/>
            <person name="Poulain J."/>
            <person name="Schoch C.L."/>
            <person name="Simon A."/>
            <person name="Spatafora J.W."/>
            <person name="Stachowiak A."/>
            <person name="Turgeon B.G."/>
            <person name="Tyler B.M."/>
            <person name="Vincent D."/>
            <person name="Weissenbach J."/>
            <person name="Amselem J."/>
            <person name="Quesneville H."/>
            <person name="Oliver R.P."/>
            <person name="Wincker P."/>
            <person name="Balesdent M.-H."/>
            <person name="Howlett B.J."/>
        </authorList>
    </citation>
    <scope>NUCLEOTIDE SEQUENCE [LARGE SCALE GENOMIC DNA]</scope>
    <source>
        <strain>JN3 / isolate v23.1.3 / race Av1-4-5-6-7-8</strain>
    </source>
</reference>
<accession>E5R5D9</accession>